<protein>
    <recommendedName>
        <fullName evidence="1">Large ribosomal subunit protein uL29</fullName>
    </recommendedName>
    <alternativeName>
        <fullName evidence="2">50S ribosomal protein L29</fullName>
    </alternativeName>
</protein>
<sequence>MAKSLTAAELRGYSVKELTEKLKEAKEELFNLRFQAATGQLDNNSRLRIVKREIARIYTVLREHELGIMPLAAEESADKAKEAAE</sequence>
<gene>
    <name evidence="1" type="primary">rpmC</name>
    <name type="ordered locus">Tfu_2638</name>
</gene>
<accession>Q47LK1</accession>
<name>RL29_THEFY</name>
<reference key="1">
    <citation type="journal article" date="2007" name="J. Bacteriol.">
        <title>Genome sequence and analysis of the soil cellulolytic actinomycete Thermobifida fusca YX.</title>
        <authorList>
            <person name="Lykidis A."/>
            <person name="Mavromatis K."/>
            <person name="Ivanova N."/>
            <person name="Anderson I."/>
            <person name="Land M."/>
            <person name="DiBartolo G."/>
            <person name="Martinez M."/>
            <person name="Lapidus A."/>
            <person name="Lucas S."/>
            <person name="Copeland A."/>
            <person name="Richardson P."/>
            <person name="Wilson D.B."/>
            <person name="Kyrpides N."/>
        </authorList>
    </citation>
    <scope>NUCLEOTIDE SEQUENCE [LARGE SCALE GENOMIC DNA]</scope>
    <source>
        <strain>YX</strain>
    </source>
</reference>
<feature type="chain" id="PRO_1000007644" description="Large ribosomal subunit protein uL29">
    <location>
        <begin position="1"/>
        <end position="85"/>
    </location>
</feature>
<organism>
    <name type="scientific">Thermobifida fusca (strain YX)</name>
    <dbReference type="NCBI Taxonomy" id="269800"/>
    <lineage>
        <taxon>Bacteria</taxon>
        <taxon>Bacillati</taxon>
        <taxon>Actinomycetota</taxon>
        <taxon>Actinomycetes</taxon>
        <taxon>Streptosporangiales</taxon>
        <taxon>Nocardiopsidaceae</taxon>
        <taxon>Thermobifida</taxon>
    </lineage>
</organism>
<comment type="similarity">
    <text evidence="1">Belongs to the universal ribosomal protein uL29 family.</text>
</comment>
<dbReference type="EMBL" id="CP000088">
    <property type="protein sequence ID" value="AAZ56671.1"/>
    <property type="molecule type" value="Genomic_DNA"/>
</dbReference>
<dbReference type="RefSeq" id="WP_011293061.1">
    <property type="nucleotide sequence ID" value="NC_007333.1"/>
</dbReference>
<dbReference type="SMR" id="Q47LK1"/>
<dbReference type="STRING" id="269800.Tfu_2638"/>
<dbReference type="KEGG" id="tfu:Tfu_2638"/>
<dbReference type="eggNOG" id="COG0255">
    <property type="taxonomic scope" value="Bacteria"/>
</dbReference>
<dbReference type="HOGENOM" id="CLU_158491_3_3_11"/>
<dbReference type="OrthoDB" id="9815192at2"/>
<dbReference type="GO" id="GO:0022625">
    <property type="term" value="C:cytosolic large ribosomal subunit"/>
    <property type="evidence" value="ECO:0007669"/>
    <property type="project" value="TreeGrafter"/>
</dbReference>
<dbReference type="GO" id="GO:0003735">
    <property type="term" value="F:structural constituent of ribosome"/>
    <property type="evidence" value="ECO:0007669"/>
    <property type="project" value="InterPro"/>
</dbReference>
<dbReference type="GO" id="GO:0006412">
    <property type="term" value="P:translation"/>
    <property type="evidence" value="ECO:0007669"/>
    <property type="project" value="UniProtKB-UniRule"/>
</dbReference>
<dbReference type="CDD" id="cd00427">
    <property type="entry name" value="Ribosomal_L29_HIP"/>
    <property type="match status" value="1"/>
</dbReference>
<dbReference type="FunFam" id="1.10.287.310:FF:000001">
    <property type="entry name" value="50S ribosomal protein L29"/>
    <property type="match status" value="1"/>
</dbReference>
<dbReference type="Gene3D" id="1.10.287.310">
    <property type="match status" value="1"/>
</dbReference>
<dbReference type="HAMAP" id="MF_00374">
    <property type="entry name" value="Ribosomal_uL29"/>
    <property type="match status" value="1"/>
</dbReference>
<dbReference type="InterPro" id="IPR050063">
    <property type="entry name" value="Ribosomal_protein_uL29"/>
</dbReference>
<dbReference type="InterPro" id="IPR001854">
    <property type="entry name" value="Ribosomal_uL29"/>
</dbReference>
<dbReference type="InterPro" id="IPR018254">
    <property type="entry name" value="Ribosomal_uL29_CS"/>
</dbReference>
<dbReference type="InterPro" id="IPR036049">
    <property type="entry name" value="Ribosomal_uL29_sf"/>
</dbReference>
<dbReference type="NCBIfam" id="TIGR00012">
    <property type="entry name" value="L29"/>
    <property type="match status" value="1"/>
</dbReference>
<dbReference type="PANTHER" id="PTHR10916">
    <property type="entry name" value="60S RIBOSOMAL PROTEIN L35/50S RIBOSOMAL PROTEIN L29"/>
    <property type="match status" value="1"/>
</dbReference>
<dbReference type="PANTHER" id="PTHR10916:SF0">
    <property type="entry name" value="LARGE RIBOSOMAL SUBUNIT PROTEIN UL29C"/>
    <property type="match status" value="1"/>
</dbReference>
<dbReference type="Pfam" id="PF00831">
    <property type="entry name" value="Ribosomal_L29"/>
    <property type="match status" value="1"/>
</dbReference>
<dbReference type="SUPFAM" id="SSF46561">
    <property type="entry name" value="Ribosomal protein L29 (L29p)"/>
    <property type="match status" value="1"/>
</dbReference>
<dbReference type="PROSITE" id="PS00579">
    <property type="entry name" value="RIBOSOMAL_L29"/>
    <property type="match status" value="1"/>
</dbReference>
<evidence type="ECO:0000255" key="1">
    <source>
        <dbReference type="HAMAP-Rule" id="MF_00374"/>
    </source>
</evidence>
<evidence type="ECO:0000305" key="2"/>
<keyword id="KW-0687">Ribonucleoprotein</keyword>
<keyword id="KW-0689">Ribosomal protein</keyword>
<proteinExistence type="inferred from homology"/>